<gene>
    <name evidence="1" type="primary">rplI</name>
    <name type="ordered locus">SPD_2031</name>
</gene>
<sequence>MKVIFLADVKGKGKKGEIKEVPTGYAQNFLIKKNLAKEATAQAVGELRGKQKSEEKAHAEMIAEGKAIKAQLEAEETVVEFVEKVGPDGRTFGSITNKKIAEELQKQFGIKIDKRHIQVQAPIRAVGLIDVPVKIYQDITSVINLRVKEG</sequence>
<protein>
    <recommendedName>
        <fullName evidence="1">Large ribosomal subunit protein bL9</fullName>
    </recommendedName>
    <alternativeName>
        <fullName evidence="2">50S ribosomal protein L9</fullName>
    </alternativeName>
</protein>
<name>RL9_STRP2</name>
<evidence type="ECO:0000255" key="1">
    <source>
        <dbReference type="HAMAP-Rule" id="MF_00503"/>
    </source>
</evidence>
<evidence type="ECO:0000305" key="2"/>
<keyword id="KW-1185">Reference proteome</keyword>
<keyword id="KW-0687">Ribonucleoprotein</keyword>
<keyword id="KW-0689">Ribosomal protein</keyword>
<keyword id="KW-0694">RNA-binding</keyword>
<keyword id="KW-0699">rRNA-binding</keyword>
<accession>Q04HX2</accession>
<feature type="chain" id="PRO_1000014870" description="Large ribosomal subunit protein bL9">
    <location>
        <begin position="1"/>
        <end position="150"/>
    </location>
</feature>
<reference key="1">
    <citation type="journal article" date="2007" name="J. Bacteriol.">
        <title>Genome sequence of Avery's virulent serotype 2 strain D39 of Streptococcus pneumoniae and comparison with that of unencapsulated laboratory strain R6.</title>
        <authorList>
            <person name="Lanie J.A."/>
            <person name="Ng W.-L."/>
            <person name="Kazmierczak K.M."/>
            <person name="Andrzejewski T.M."/>
            <person name="Davidsen T.M."/>
            <person name="Wayne K.J."/>
            <person name="Tettelin H."/>
            <person name="Glass J.I."/>
            <person name="Winkler M.E."/>
        </authorList>
    </citation>
    <scope>NUCLEOTIDE SEQUENCE [LARGE SCALE GENOMIC DNA]</scope>
    <source>
        <strain>D39 / NCTC 7466</strain>
    </source>
</reference>
<comment type="function">
    <text evidence="1">Binds to the 23S rRNA.</text>
</comment>
<comment type="similarity">
    <text evidence="1">Belongs to the bacterial ribosomal protein bL9 family.</text>
</comment>
<organism>
    <name type="scientific">Streptococcus pneumoniae serotype 2 (strain D39 / NCTC 7466)</name>
    <dbReference type="NCBI Taxonomy" id="373153"/>
    <lineage>
        <taxon>Bacteria</taxon>
        <taxon>Bacillati</taxon>
        <taxon>Bacillota</taxon>
        <taxon>Bacilli</taxon>
        <taxon>Lactobacillales</taxon>
        <taxon>Streptococcaceae</taxon>
        <taxon>Streptococcus</taxon>
    </lineage>
</organism>
<proteinExistence type="inferred from homology"/>
<dbReference type="EMBL" id="CP000410">
    <property type="protein sequence ID" value="ABJ53631.1"/>
    <property type="molecule type" value="Genomic_DNA"/>
</dbReference>
<dbReference type="RefSeq" id="WP_000864220.1">
    <property type="nucleotide sequence ID" value="NZ_JAMLJR010000007.1"/>
</dbReference>
<dbReference type="SMR" id="Q04HX2"/>
<dbReference type="PaxDb" id="373153-SPD_2031"/>
<dbReference type="GeneID" id="45652575"/>
<dbReference type="KEGG" id="spd:SPD_2031"/>
<dbReference type="eggNOG" id="COG0359">
    <property type="taxonomic scope" value="Bacteria"/>
</dbReference>
<dbReference type="HOGENOM" id="CLU_078938_3_2_9"/>
<dbReference type="BioCyc" id="SPNE373153:G1G6V-2179-MONOMER"/>
<dbReference type="Proteomes" id="UP000001452">
    <property type="component" value="Chromosome"/>
</dbReference>
<dbReference type="GO" id="GO:1990904">
    <property type="term" value="C:ribonucleoprotein complex"/>
    <property type="evidence" value="ECO:0007669"/>
    <property type="project" value="UniProtKB-KW"/>
</dbReference>
<dbReference type="GO" id="GO:0005840">
    <property type="term" value="C:ribosome"/>
    <property type="evidence" value="ECO:0007669"/>
    <property type="project" value="UniProtKB-KW"/>
</dbReference>
<dbReference type="GO" id="GO:0019843">
    <property type="term" value="F:rRNA binding"/>
    <property type="evidence" value="ECO:0007669"/>
    <property type="project" value="UniProtKB-UniRule"/>
</dbReference>
<dbReference type="GO" id="GO:0003735">
    <property type="term" value="F:structural constituent of ribosome"/>
    <property type="evidence" value="ECO:0007669"/>
    <property type="project" value="InterPro"/>
</dbReference>
<dbReference type="GO" id="GO:0006412">
    <property type="term" value="P:translation"/>
    <property type="evidence" value="ECO:0007669"/>
    <property type="project" value="UniProtKB-UniRule"/>
</dbReference>
<dbReference type="FunFam" id="3.10.430.100:FF:000009">
    <property type="entry name" value="50S ribosomal protein L9"/>
    <property type="match status" value="1"/>
</dbReference>
<dbReference type="FunFam" id="3.40.5.10:FF:000002">
    <property type="entry name" value="50S ribosomal protein L9"/>
    <property type="match status" value="1"/>
</dbReference>
<dbReference type="Gene3D" id="3.10.430.100">
    <property type="entry name" value="Ribosomal protein L9, C-terminal domain"/>
    <property type="match status" value="1"/>
</dbReference>
<dbReference type="Gene3D" id="3.40.5.10">
    <property type="entry name" value="Ribosomal protein L9, N-terminal domain"/>
    <property type="match status" value="1"/>
</dbReference>
<dbReference type="HAMAP" id="MF_00503">
    <property type="entry name" value="Ribosomal_bL9"/>
    <property type="match status" value="1"/>
</dbReference>
<dbReference type="InterPro" id="IPR000244">
    <property type="entry name" value="Ribosomal_bL9"/>
</dbReference>
<dbReference type="InterPro" id="IPR009027">
    <property type="entry name" value="Ribosomal_bL9/RNase_H1_N"/>
</dbReference>
<dbReference type="InterPro" id="IPR020594">
    <property type="entry name" value="Ribosomal_bL9_bac/chp"/>
</dbReference>
<dbReference type="InterPro" id="IPR020069">
    <property type="entry name" value="Ribosomal_bL9_C"/>
</dbReference>
<dbReference type="InterPro" id="IPR036791">
    <property type="entry name" value="Ribosomal_bL9_C_sf"/>
</dbReference>
<dbReference type="InterPro" id="IPR020070">
    <property type="entry name" value="Ribosomal_bL9_N"/>
</dbReference>
<dbReference type="InterPro" id="IPR036935">
    <property type="entry name" value="Ribosomal_bL9_N_sf"/>
</dbReference>
<dbReference type="NCBIfam" id="TIGR00158">
    <property type="entry name" value="L9"/>
    <property type="match status" value="1"/>
</dbReference>
<dbReference type="PANTHER" id="PTHR21368">
    <property type="entry name" value="50S RIBOSOMAL PROTEIN L9"/>
    <property type="match status" value="1"/>
</dbReference>
<dbReference type="Pfam" id="PF03948">
    <property type="entry name" value="Ribosomal_L9_C"/>
    <property type="match status" value="1"/>
</dbReference>
<dbReference type="Pfam" id="PF01281">
    <property type="entry name" value="Ribosomal_L9_N"/>
    <property type="match status" value="1"/>
</dbReference>
<dbReference type="SUPFAM" id="SSF55658">
    <property type="entry name" value="L9 N-domain-like"/>
    <property type="match status" value="1"/>
</dbReference>
<dbReference type="SUPFAM" id="SSF55653">
    <property type="entry name" value="Ribosomal protein L9 C-domain"/>
    <property type="match status" value="1"/>
</dbReference>
<dbReference type="PROSITE" id="PS00651">
    <property type="entry name" value="RIBOSOMAL_L9"/>
    <property type="match status" value="1"/>
</dbReference>